<keyword id="KW-0413">Isomerase</keyword>
<comment type="catalytic activity">
    <reaction evidence="1">
        <text>D-glucuronate = D-fructuronate</text>
        <dbReference type="Rhea" id="RHEA:13049"/>
        <dbReference type="ChEBI" id="CHEBI:58720"/>
        <dbReference type="ChEBI" id="CHEBI:59863"/>
        <dbReference type="EC" id="5.3.1.12"/>
    </reaction>
</comment>
<comment type="catalytic activity">
    <reaction evidence="1">
        <text>aldehydo-D-galacturonate = keto-D-tagaturonate</text>
        <dbReference type="Rhea" id="RHEA:27702"/>
        <dbReference type="ChEBI" id="CHEBI:12952"/>
        <dbReference type="ChEBI" id="CHEBI:17886"/>
        <dbReference type="EC" id="5.3.1.12"/>
    </reaction>
</comment>
<comment type="pathway">
    <text evidence="1">Carbohydrate metabolism; pentose and glucuronate interconversion.</text>
</comment>
<comment type="similarity">
    <text evidence="1">Belongs to the metallo-dependent hydrolases superfamily. Uronate isomerase family.</text>
</comment>
<organism>
    <name type="scientific">Mesorhizobium japonicum (strain LMG 29417 / CECT 9101 / MAFF 303099)</name>
    <name type="common">Mesorhizobium loti (strain MAFF 303099)</name>
    <dbReference type="NCBI Taxonomy" id="266835"/>
    <lineage>
        <taxon>Bacteria</taxon>
        <taxon>Pseudomonadati</taxon>
        <taxon>Pseudomonadota</taxon>
        <taxon>Alphaproteobacteria</taxon>
        <taxon>Hyphomicrobiales</taxon>
        <taxon>Phyllobacteriaceae</taxon>
        <taxon>Mesorhizobium</taxon>
    </lineage>
</organism>
<protein>
    <recommendedName>
        <fullName evidence="1">Uronate isomerase</fullName>
        <ecNumber evidence="1">5.3.1.12</ecNumber>
    </recommendedName>
    <alternativeName>
        <fullName evidence="1">Glucuronate isomerase</fullName>
    </alternativeName>
    <alternativeName>
        <fullName evidence="1">Uronic isomerase</fullName>
    </alternativeName>
</protein>
<feature type="chain" id="PRO_0000172781" description="Uronate isomerase">
    <location>
        <begin position="1"/>
        <end position="469"/>
    </location>
</feature>
<reference key="1">
    <citation type="journal article" date="2000" name="DNA Res.">
        <title>Complete genome structure of the nitrogen-fixing symbiotic bacterium Mesorhizobium loti.</title>
        <authorList>
            <person name="Kaneko T."/>
            <person name="Nakamura Y."/>
            <person name="Sato S."/>
            <person name="Asamizu E."/>
            <person name="Kato T."/>
            <person name="Sasamoto S."/>
            <person name="Watanabe A."/>
            <person name="Idesawa K."/>
            <person name="Ishikawa A."/>
            <person name="Kawashima K."/>
            <person name="Kimura T."/>
            <person name="Kishida Y."/>
            <person name="Kiyokawa C."/>
            <person name="Kohara M."/>
            <person name="Matsumoto M."/>
            <person name="Matsuno A."/>
            <person name="Mochizuki Y."/>
            <person name="Nakayama S."/>
            <person name="Nakazaki N."/>
            <person name="Shimpo S."/>
            <person name="Sugimoto M."/>
            <person name="Takeuchi C."/>
            <person name="Yamada M."/>
            <person name="Tabata S."/>
        </authorList>
    </citation>
    <scope>NUCLEOTIDE SEQUENCE [LARGE SCALE GENOMIC DNA]</scope>
    <source>
        <strain>LMG 29417 / CECT 9101 / MAFF 303099</strain>
    </source>
</reference>
<dbReference type="EC" id="5.3.1.12" evidence="1"/>
<dbReference type="EMBL" id="BA000012">
    <property type="protein sequence ID" value="BAB50806.1"/>
    <property type="molecule type" value="Genomic_DNA"/>
</dbReference>
<dbReference type="RefSeq" id="WP_010912149.1">
    <property type="nucleotide sequence ID" value="NC_002678.2"/>
</dbReference>
<dbReference type="SMR" id="Q98EW1"/>
<dbReference type="KEGG" id="mlo:mll4056"/>
<dbReference type="PATRIC" id="fig|266835.9.peg.3212"/>
<dbReference type="eggNOG" id="COG1904">
    <property type="taxonomic scope" value="Bacteria"/>
</dbReference>
<dbReference type="HOGENOM" id="CLU_044465_0_0_5"/>
<dbReference type="UniPathway" id="UPA00246"/>
<dbReference type="Proteomes" id="UP000000552">
    <property type="component" value="Chromosome"/>
</dbReference>
<dbReference type="GO" id="GO:0008880">
    <property type="term" value="F:glucuronate isomerase activity"/>
    <property type="evidence" value="ECO:0007669"/>
    <property type="project" value="UniProtKB-UniRule"/>
</dbReference>
<dbReference type="GO" id="GO:0019698">
    <property type="term" value="P:D-galacturonate catabolic process"/>
    <property type="evidence" value="ECO:0007669"/>
    <property type="project" value="TreeGrafter"/>
</dbReference>
<dbReference type="GO" id="GO:0042840">
    <property type="term" value="P:D-glucuronate catabolic process"/>
    <property type="evidence" value="ECO:0007669"/>
    <property type="project" value="TreeGrafter"/>
</dbReference>
<dbReference type="Gene3D" id="3.20.20.140">
    <property type="entry name" value="Metal-dependent hydrolases"/>
    <property type="match status" value="1"/>
</dbReference>
<dbReference type="Gene3D" id="1.10.2020.10">
    <property type="entry name" value="uronate isomerase, domain 2, chain A"/>
    <property type="match status" value="1"/>
</dbReference>
<dbReference type="HAMAP" id="MF_00675">
    <property type="entry name" value="UxaC"/>
    <property type="match status" value="1"/>
</dbReference>
<dbReference type="InterPro" id="IPR032466">
    <property type="entry name" value="Metal_Hydrolase"/>
</dbReference>
<dbReference type="InterPro" id="IPR003766">
    <property type="entry name" value="Uronate_isomerase"/>
</dbReference>
<dbReference type="NCBIfam" id="NF002794">
    <property type="entry name" value="PRK02925.1"/>
    <property type="match status" value="1"/>
</dbReference>
<dbReference type="PANTHER" id="PTHR30068">
    <property type="entry name" value="URONATE ISOMERASE"/>
    <property type="match status" value="1"/>
</dbReference>
<dbReference type="PANTHER" id="PTHR30068:SF4">
    <property type="entry name" value="URONATE ISOMERASE"/>
    <property type="match status" value="1"/>
</dbReference>
<dbReference type="Pfam" id="PF02614">
    <property type="entry name" value="UxaC"/>
    <property type="match status" value="1"/>
</dbReference>
<dbReference type="SUPFAM" id="SSF51556">
    <property type="entry name" value="Metallo-dependent hydrolases"/>
    <property type="match status" value="1"/>
</dbReference>
<sequence>MVALTDPDLLFPPEAHSRSLARDLYAGIKDLPIVSPHGHTDPRWYALNEPFPDPAQLLIVPDHYIFRMLFSQGVRLEDLGVASLDGAPVETDGRTIWRRFAEHYYLFRGTPTRLWFDHVLAHLFGIEEPLDATTADRHYDTIATVLQWENFRPRALFERFNIEVIATTEGALDDLEWHKMIRDSGWEGRVVTAYRPDAVVDPDFEGFSANLDRLGEITGCDTGSWAGYLDAHRQRRAFFKSFGATSSDHGHPTAETANLSDAAAQELFNRIRRGSQDERERKLFRAQMLTEMAKMSRDDGLVLQIHPGSWRNHSPSVFQRFGRDKGFDIPTRTDYVTALKPLLDCVGLERDLTVILFTLDESSYARELAPLAGVYPALKLGPAWWFHDSPEGMRRFREMTTETAGFYNTVGFNDDTRAFPSIPARHDVARRVDCAFLARLVAEHRLREDEAHELARELAHTLAKKAYRL</sequence>
<gene>
    <name evidence="1" type="primary">uxaC</name>
    <name type="ordered locus">mll4056</name>
</gene>
<name>UXAC_RHILO</name>
<evidence type="ECO:0000255" key="1">
    <source>
        <dbReference type="HAMAP-Rule" id="MF_00675"/>
    </source>
</evidence>
<accession>Q98EW1</accession>
<proteinExistence type="inferred from homology"/>